<comment type="function">
    <text evidence="1 6">Binds the poly(A) tail of mRNA. Appears to be an important mediator of the multiple roles of the poly(A) tail in mRNA biogenesis, stability and translation. In the nucleus, involved in both mRNA cleavage and polyadenylation. Is also required for efficient mRNA export to the cytoplasm. Acts in concert with a poly(A)-specific nuclease (PAN) to affect poly(A) tail shortening, which may occur concomitantly with either nucleocytoplasmic mRNA transport or translational initiation. In the cytoplasm, stimulates translation initiation and regulates mRNA decay through translation termination-coupled poly(A) shortening, probably mediated by PAN (By similarity).</text>
</comment>
<comment type="subunit">
    <text evidence="5">Interacts with cid13.</text>
</comment>
<comment type="subcellular location">
    <subcellularLocation>
        <location>Cytoplasm</location>
    </subcellularLocation>
    <subcellularLocation>
        <location>Nucleus</location>
    </subcellularLocation>
</comment>
<comment type="similarity">
    <text evidence="8">Belongs to the polyadenylate-binding protein type-1 family.</text>
</comment>
<comment type="sequence caution" evidence="8">
    <conflict type="frameshift">
        <sequence resource="EMBL-CDS" id="AAA35320"/>
    </conflict>
</comment>
<evidence type="ECO:0000250" key="1"/>
<evidence type="ECO:0000255" key="2">
    <source>
        <dbReference type="PROSITE-ProRule" id="PRU00176"/>
    </source>
</evidence>
<evidence type="ECO:0000255" key="3">
    <source>
        <dbReference type="PROSITE-ProRule" id="PRU00641"/>
    </source>
</evidence>
<evidence type="ECO:0000256" key="4">
    <source>
        <dbReference type="SAM" id="MobiDB-lite"/>
    </source>
</evidence>
<evidence type="ECO:0000269" key="5">
    <source>
    </source>
</evidence>
<evidence type="ECO:0000269" key="6">
    <source>
    </source>
</evidence>
<evidence type="ECO:0000269" key="7">
    <source>
    </source>
</evidence>
<evidence type="ECO:0000305" key="8"/>
<dbReference type="EMBL" id="CU329670">
    <property type="protein sequence ID" value="CAB08762.1"/>
    <property type="molecule type" value="Genomic_DNA"/>
</dbReference>
<dbReference type="EMBL" id="M64603">
    <property type="protein sequence ID" value="AAA35320.1"/>
    <property type="status" value="ALT_FRAME"/>
    <property type="molecule type" value="mRNA"/>
</dbReference>
<dbReference type="PIR" id="T38950">
    <property type="entry name" value="DNZPPA"/>
</dbReference>
<dbReference type="RefSeq" id="NP_593377.1">
    <property type="nucleotide sequence ID" value="NM_001018809.2"/>
</dbReference>
<dbReference type="SMR" id="P31209"/>
<dbReference type="BioGRID" id="278007">
    <property type="interactions" value="27"/>
</dbReference>
<dbReference type="FunCoup" id="P31209">
    <property type="interactions" value="475"/>
</dbReference>
<dbReference type="IntAct" id="P31209">
    <property type="interactions" value="1"/>
</dbReference>
<dbReference type="STRING" id="284812.P31209"/>
<dbReference type="iPTMnet" id="P31209"/>
<dbReference type="PaxDb" id="4896-SPAC57A7.04c.1"/>
<dbReference type="EnsemblFungi" id="SPAC57A7.04c.1">
    <property type="protein sequence ID" value="SPAC57A7.04c.1:pep"/>
    <property type="gene ID" value="SPAC57A7.04c"/>
</dbReference>
<dbReference type="GeneID" id="2541505"/>
<dbReference type="KEGG" id="spo:2541505"/>
<dbReference type="PomBase" id="SPAC57A7.04c"/>
<dbReference type="VEuPathDB" id="FungiDB:SPAC57A7.04c"/>
<dbReference type="eggNOG" id="KOG0123">
    <property type="taxonomic scope" value="Eukaryota"/>
</dbReference>
<dbReference type="HOGENOM" id="CLU_012062_22_4_1"/>
<dbReference type="InParanoid" id="P31209"/>
<dbReference type="OMA" id="QQPGFMP"/>
<dbReference type="PhylomeDB" id="P31209"/>
<dbReference type="PRO" id="PR:P31209"/>
<dbReference type="Proteomes" id="UP000002485">
    <property type="component" value="Chromosome I"/>
</dbReference>
<dbReference type="GO" id="GO:0005737">
    <property type="term" value="C:cytoplasm"/>
    <property type="evidence" value="ECO:0000314"/>
    <property type="project" value="PomBase"/>
</dbReference>
<dbReference type="GO" id="GO:0010494">
    <property type="term" value="C:cytoplasmic stress granule"/>
    <property type="evidence" value="ECO:0000314"/>
    <property type="project" value="PomBase"/>
</dbReference>
<dbReference type="GO" id="GO:0005829">
    <property type="term" value="C:cytosol"/>
    <property type="evidence" value="ECO:0007005"/>
    <property type="project" value="PomBase"/>
</dbReference>
<dbReference type="GO" id="GO:0005634">
    <property type="term" value="C:nucleus"/>
    <property type="evidence" value="ECO:0000318"/>
    <property type="project" value="GO_Central"/>
</dbReference>
<dbReference type="GO" id="GO:0071014">
    <property type="term" value="C:post-mRNA release spliceosomal complex"/>
    <property type="evidence" value="ECO:0000314"/>
    <property type="project" value="PomBase"/>
</dbReference>
<dbReference type="GO" id="GO:1990904">
    <property type="term" value="C:ribonucleoprotein complex"/>
    <property type="evidence" value="ECO:0000318"/>
    <property type="project" value="GO_Central"/>
</dbReference>
<dbReference type="GO" id="GO:0003730">
    <property type="term" value="F:mRNA 3'-UTR binding"/>
    <property type="evidence" value="ECO:0000318"/>
    <property type="project" value="GO_Central"/>
</dbReference>
<dbReference type="GO" id="GO:0008143">
    <property type="term" value="F:poly(A) binding"/>
    <property type="evidence" value="ECO:0000314"/>
    <property type="project" value="PomBase"/>
</dbReference>
<dbReference type="GO" id="GO:0008266">
    <property type="term" value="F:poly(U) RNA binding"/>
    <property type="evidence" value="ECO:0000318"/>
    <property type="project" value="GO_Central"/>
</dbReference>
<dbReference type="GO" id="GO:0031124">
    <property type="term" value="P:mRNA 3'-end processing"/>
    <property type="evidence" value="ECO:0000266"/>
    <property type="project" value="PomBase"/>
</dbReference>
<dbReference type="GO" id="GO:0051028">
    <property type="term" value="P:mRNA transport"/>
    <property type="evidence" value="ECO:0007669"/>
    <property type="project" value="UniProtKB-KW"/>
</dbReference>
<dbReference type="GO" id="GO:0000289">
    <property type="term" value="P:nuclear-transcribed mRNA poly(A) tail shortening"/>
    <property type="evidence" value="ECO:0000314"/>
    <property type="project" value="PomBase"/>
</dbReference>
<dbReference type="GO" id="GO:0060211">
    <property type="term" value="P:regulation of nuclear-transcribed mRNA poly(A) tail shortening"/>
    <property type="evidence" value="ECO:0000266"/>
    <property type="project" value="PomBase"/>
</dbReference>
<dbReference type="GO" id="GO:0006417">
    <property type="term" value="P:regulation of translation"/>
    <property type="evidence" value="ECO:0007669"/>
    <property type="project" value="UniProtKB-KW"/>
</dbReference>
<dbReference type="CDD" id="cd12378">
    <property type="entry name" value="RRM1_I_PABPs"/>
    <property type="match status" value="1"/>
</dbReference>
<dbReference type="CDD" id="cd12379">
    <property type="entry name" value="RRM2_I_PABPs"/>
    <property type="match status" value="1"/>
</dbReference>
<dbReference type="CDD" id="cd12380">
    <property type="entry name" value="RRM3_I_PABPs"/>
    <property type="match status" value="1"/>
</dbReference>
<dbReference type="CDD" id="cd12381">
    <property type="entry name" value="RRM4_I_PABPs"/>
    <property type="match status" value="1"/>
</dbReference>
<dbReference type="FunFam" id="3.30.70.330:FF:002233">
    <property type="match status" value="1"/>
</dbReference>
<dbReference type="FunFam" id="3.30.70.330:FF:000003">
    <property type="entry name" value="Polyadenylate-binding protein"/>
    <property type="match status" value="1"/>
</dbReference>
<dbReference type="FunFam" id="3.30.70.330:FF:000384">
    <property type="entry name" value="Polyadenylate-binding protein"/>
    <property type="match status" value="1"/>
</dbReference>
<dbReference type="FunFam" id="3.30.70.330:FF:000441">
    <property type="entry name" value="Polyadenylate-binding protein"/>
    <property type="match status" value="1"/>
</dbReference>
<dbReference type="Gene3D" id="3.30.70.330">
    <property type="match status" value="4"/>
</dbReference>
<dbReference type="Gene3D" id="1.10.1900.10">
    <property type="entry name" value="c-terminal domain of poly(a) binding protein"/>
    <property type="match status" value="1"/>
</dbReference>
<dbReference type="InterPro" id="IPR012677">
    <property type="entry name" value="Nucleotide-bd_a/b_plait_sf"/>
</dbReference>
<dbReference type="InterPro" id="IPR036053">
    <property type="entry name" value="PABP-dom"/>
</dbReference>
<dbReference type="InterPro" id="IPR006515">
    <property type="entry name" value="PABP_1234"/>
</dbReference>
<dbReference type="InterPro" id="IPR002004">
    <property type="entry name" value="PABP_HYD_C"/>
</dbReference>
<dbReference type="InterPro" id="IPR034364">
    <property type="entry name" value="PABP_RRM1"/>
</dbReference>
<dbReference type="InterPro" id="IPR035979">
    <property type="entry name" value="RBD_domain_sf"/>
</dbReference>
<dbReference type="InterPro" id="IPR045305">
    <property type="entry name" value="RRM2_I_PABPs"/>
</dbReference>
<dbReference type="InterPro" id="IPR000504">
    <property type="entry name" value="RRM_dom"/>
</dbReference>
<dbReference type="InterPro" id="IPR003954">
    <property type="entry name" value="RRM_dom_euk"/>
</dbReference>
<dbReference type="NCBIfam" id="TIGR01628">
    <property type="entry name" value="PABP-1234"/>
    <property type="match status" value="1"/>
</dbReference>
<dbReference type="PANTHER" id="PTHR24012">
    <property type="entry name" value="RNA BINDING PROTEIN"/>
    <property type="match status" value="1"/>
</dbReference>
<dbReference type="Pfam" id="PF00658">
    <property type="entry name" value="MLLE"/>
    <property type="match status" value="1"/>
</dbReference>
<dbReference type="Pfam" id="PF00076">
    <property type="entry name" value="RRM_1"/>
    <property type="match status" value="4"/>
</dbReference>
<dbReference type="SMART" id="SM00517">
    <property type="entry name" value="PolyA"/>
    <property type="match status" value="1"/>
</dbReference>
<dbReference type="SMART" id="SM00360">
    <property type="entry name" value="RRM"/>
    <property type="match status" value="4"/>
</dbReference>
<dbReference type="SMART" id="SM00361">
    <property type="entry name" value="RRM_1"/>
    <property type="match status" value="4"/>
</dbReference>
<dbReference type="SUPFAM" id="SSF63570">
    <property type="entry name" value="PABC (PABP) domain"/>
    <property type="match status" value="1"/>
</dbReference>
<dbReference type="SUPFAM" id="SSF54928">
    <property type="entry name" value="RNA-binding domain, RBD"/>
    <property type="match status" value="2"/>
</dbReference>
<dbReference type="PROSITE" id="PS51309">
    <property type="entry name" value="PABC"/>
    <property type="match status" value="1"/>
</dbReference>
<dbReference type="PROSITE" id="PS50102">
    <property type="entry name" value="RRM"/>
    <property type="match status" value="4"/>
</dbReference>
<feature type="chain" id="PRO_0000081718" description="Polyadenylate-binding protein, cytoplasmic and nuclear">
    <location>
        <begin position="1"/>
        <end position="653"/>
    </location>
</feature>
<feature type="domain" description="RRM 1" evidence="2">
    <location>
        <begin position="80"/>
        <end position="158"/>
    </location>
</feature>
<feature type="domain" description="RRM 2" evidence="2">
    <location>
        <begin position="168"/>
        <end position="245"/>
    </location>
</feature>
<feature type="domain" description="RRM 3" evidence="2">
    <location>
        <begin position="261"/>
        <end position="338"/>
    </location>
</feature>
<feature type="domain" description="RRM 4" evidence="2">
    <location>
        <begin position="364"/>
        <end position="441"/>
    </location>
</feature>
<feature type="domain" description="PABC" evidence="3">
    <location>
        <begin position="569"/>
        <end position="646"/>
    </location>
</feature>
<feature type="region of interest" description="Disordered" evidence="4">
    <location>
        <begin position="1"/>
        <end position="77"/>
    </location>
</feature>
<feature type="compositionally biased region" description="Basic and acidic residues" evidence="4">
    <location>
        <begin position="1"/>
        <end position="10"/>
    </location>
</feature>
<feature type="compositionally biased region" description="Polar residues" evidence="4">
    <location>
        <begin position="17"/>
        <end position="27"/>
    </location>
</feature>
<feature type="compositionally biased region" description="Low complexity" evidence="4">
    <location>
        <begin position="53"/>
        <end position="68"/>
    </location>
</feature>
<feature type="modified residue" description="Phosphothreonine" evidence="7">
    <location>
        <position position="167"/>
    </location>
</feature>
<feature type="sequence conflict" description="In Ref. 2; AAA35320." evidence="8" ref="2">
    <original>MPSTDLKKQADAAVESDVNTNNEAVESSTKEESS</original>
    <variation>MSLENSSTLSLCSNNTTHFW</variation>
    <location>
        <begin position="1"/>
        <end position="34"/>
    </location>
</feature>
<feature type="sequence conflict" description="In Ref. 2; AAA35320." evidence="8" ref="2">
    <original>R</original>
    <variation>A</variation>
    <location>
        <position position="349"/>
    </location>
</feature>
<sequence length="653" mass="71513">MPSTDLKKQADAAVESDVNTNNEAVESSTKEESSNTPSTETQPEKKAEEPEAAAEPSESTSTPTNASSVATPSGTAPTSASLYVGELDPSVTEAMLFELFNSIGPVASIRVCRDAVTRRSLGYAYVNFHNMEDGEKALDELNYTLIKGRPCRIMWSQRDPSLRKMGTGNVFIKNLDPAIDNKALHDTFSAFGKILSCKVAVDELGNAKGYGFVHFDSVESANAAIEHVNGMLLNDKKVYVGHHVSRRERQSKVEALKANFTNVYIKNLDTEITEQEFSDLFGQFGEITSLSLVKDQNDKPRGFGFVNYANHECAQKAVDELNDKEYKGKKLYVGRAQKKHEREEELRKRYEQMKLEKMNKYQGVNLFIKNLQDEVDDERLKAEFSAFGTITSAKIMTDEQGKSKGFGFVCYTTPEEANKAVTEMNQRMLAGKPLYVALAQRKEVRRSQLEAQIQARNQFRLQQQVAAAAGIPAVQYGATGPLIYGPGGYPIPAAVNGRGMPMVPGHNGPMPMYPGMPTQFPAGGPAPGYPGMNARGPVPAQGRPMMMPGSVPSAGPAEAEAVPAVPGMPERFTAADLAAVPEESRKQVLGELLYPKVFVREEKLSGKITGMLLEMPNSELLELLEDDSALNERVNEAIGVLQEFVDQEPGFTE</sequence>
<reference key="1">
    <citation type="journal article" date="2002" name="Nature">
        <title>The genome sequence of Schizosaccharomyces pombe.</title>
        <authorList>
            <person name="Wood V."/>
            <person name="Gwilliam R."/>
            <person name="Rajandream M.A."/>
            <person name="Lyne M.H."/>
            <person name="Lyne R."/>
            <person name="Stewart A."/>
            <person name="Sgouros J.G."/>
            <person name="Peat N."/>
            <person name="Hayles J."/>
            <person name="Baker S.G."/>
            <person name="Basham D."/>
            <person name="Bowman S."/>
            <person name="Brooks K."/>
            <person name="Brown D."/>
            <person name="Brown S."/>
            <person name="Chillingworth T."/>
            <person name="Churcher C.M."/>
            <person name="Collins M."/>
            <person name="Connor R."/>
            <person name="Cronin A."/>
            <person name="Davis P."/>
            <person name="Feltwell T."/>
            <person name="Fraser A."/>
            <person name="Gentles S."/>
            <person name="Goble A."/>
            <person name="Hamlin N."/>
            <person name="Harris D.E."/>
            <person name="Hidalgo J."/>
            <person name="Hodgson G."/>
            <person name="Holroyd S."/>
            <person name="Hornsby T."/>
            <person name="Howarth S."/>
            <person name="Huckle E.J."/>
            <person name="Hunt S."/>
            <person name="Jagels K."/>
            <person name="James K.D."/>
            <person name="Jones L."/>
            <person name="Jones M."/>
            <person name="Leather S."/>
            <person name="McDonald S."/>
            <person name="McLean J."/>
            <person name="Mooney P."/>
            <person name="Moule S."/>
            <person name="Mungall K.L."/>
            <person name="Murphy L.D."/>
            <person name="Niblett D."/>
            <person name="Odell C."/>
            <person name="Oliver K."/>
            <person name="O'Neil S."/>
            <person name="Pearson D."/>
            <person name="Quail M.A."/>
            <person name="Rabbinowitsch E."/>
            <person name="Rutherford K.M."/>
            <person name="Rutter S."/>
            <person name="Saunders D."/>
            <person name="Seeger K."/>
            <person name="Sharp S."/>
            <person name="Skelton J."/>
            <person name="Simmonds M.N."/>
            <person name="Squares R."/>
            <person name="Squares S."/>
            <person name="Stevens K."/>
            <person name="Taylor K."/>
            <person name="Taylor R.G."/>
            <person name="Tivey A."/>
            <person name="Walsh S.V."/>
            <person name="Warren T."/>
            <person name="Whitehead S."/>
            <person name="Woodward J.R."/>
            <person name="Volckaert G."/>
            <person name="Aert R."/>
            <person name="Robben J."/>
            <person name="Grymonprez B."/>
            <person name="Weltjens I."/>
            <person name="Vanstreels E."/>
            <person name="Rieger M."/>
            <person name="Schaefer M."/>
            <person name="Mueller-Auer S."/>
            <person name="Gabel C."/>
            <person name="Fuchs M."/>
            <person name="Duesterhoeft A."/>
            <person name="Fritzc C."/>
            <person name="Holzer E."/>
            <person name="Moestl D."/>
            <person name="Hilbert H."/>
            <person name="Borzym K."/>
            <person name="Langer I."/>
            <person name="Beck A."/>
            <person name="Lehrach H."/>
            <person name="Reinhardt R."/>
            <person name="Pohl T.M."/>
            <person name="Eger P."/>
            <person name="Zimmermann W."/>
            <person name="Wedler H."/>
            <person name="Wambutt R."/>
            <person name="Purnelle B."/>
            <person name="Goffeau A."/>
            <person name="Cadieu E."/>
            <person name="Dreano S."/>
            <person name="Gloux S."/>
            <person name="Lelaure V."/>
            <person name="Mottier S."/>
            <person name="Galibert F."/>
            <person name="Aves S.J."/>
            <person name="Xiang Z."/>
            <person name="Hunt C."/>
            <person name="Moore K."/>
            <person name="Hurst S.M."/>
            <person name="Lucas M."/>
            <person name="Rochet M."/>
            <person name="Gaillardin C."/>
            <person name="Tallada V.A."/>
            <person name="Garzon A."/>
            <person name="Thode G."/>
            <person name="Daga R.R."/>
            <person name="Cruzado L."/>
            <person name="Jimenez J."/>
            <person name="Sanchez M."/>
            <person name="del Rey F."/>
            <person name="Benito J."/>
            <person name="Dominguez A."/>
            <person name="Revuelta J.L."/>
            <person name="Moreno S."/>
            <person name="Armstrong J."/>
            <person name="Forsburg S.L."/>
            <person name="Cerutti L."/>
            <person name="Lowe T."/>
            <person name="McCombie W.R."/>
            <person name="Paulsen I."/>
            <person name="Potashkin J."/>
            <person name="Shpakovski G.V."/>
            <person name="Ussery D."/>
            <person name="Barrell B.G."/>
            <person name="Nurse P."/>
        </authorList>
    </citation>
    <scope>NUCLEOTIDE SEQUENCE [LARGE SCALE GENOMIC DNA]</scope>
    <source>
        <strain>972 / ATCC 24843</strain>
    </source>
</reference>
<reference key="2">
    <citation type="journal article" date="1991" name="Mol. Cell. Biol.">
        <title>The multiple RNA-binding domains of the mRNA poly(A)-binding protein have different RNA-binding activities.</title>
        <authorList>
            <person name="Burd C.G."/>
            <person name="Matunis E.L."/>
            <person name="Dreyfuss G."/>
        </authorList>
    </citation>
    <scope>NUCLEOTIDE SEQUENCE [MRNA] OF 1-628</scope>
</reference>
<reference key="3">
    <citation type="journal article" date="2002" name="Cell">
        <title>Cid13 is a cytoplasmic poly(A) polymerase that regulates ribonucleotide reductase mRNA.</title>
        <authorList>
            <person name="Saitoh S."/>
            <person name="Chabes A."/>
            <person name="McDonald W.H."/>
            <person name="Thelander L."/>
            <person name="Yates J.R. III"/>
            <person name="Russell P."/>
        </authorList>
    </citation>
    <scope>INTERACTION WITH CID13</scope>
</reference>
<reference key="4">
    <citation type="journal article" date="2002" name="Yeast">
        <title>Schizosaccharomyces pombe spPABP, a homologue of Saccharomyces cerevisiae Pab1p, is a non-essential, shuttling protein that facilitates mRNA export.</title>
        <authorList>
            <person name="Thakurta A.G."/>
            <person name="Ho Yoon J."/>
            <person name="Dhar R."/>
        </authorList>
    </citation>
    <scope>FUNCTION IN MRNA EXPORT</scope>
    <scope>SUBCELLULAR LOCATION</scope>
</reference>
<reference key="5">
    <citation type="journal article" date="2006" name="Nat. Biotechnol.">
        <title>ORFeome cloning and global analysis of protein localization in the fission yeast Schizosaccharomyces pombe.</title>
        <authorList>
            <person name="Matsuyama A."/>
            <person name="Arai R."/>
            <person name="Yashiroda Y."/>
            <person name="Shirai A."/>
            <person name="Kamata A."/>
            <person name="Sekido S."/>
            <person name="Kobayashi Y."/>
            <person name="Hashimoto A."/>
            <person name="Hamamoto M."/>
            <person name="Hiraoka Y."/>
            <person name="Horinouchi S."/>
            <person name="Yoshida M."/>
        </authorList>
    </citation>
    <scope>SUBCELLULAR LOCATION [LARGE SCALE ANALYSIS]</scope>
</reference>
<reference key="6">
    <citation type="journal article" date="2008" name="J. Proteome Res.">
        <title>Phosphoproteome analysis of fission yeast.</title>
        <authorList>
            <person name="Wilson-Grady J.T."/>
            <person name="Villen J."/>
            <person name="Gygi S.P."/>
        </authorList>
    </citation>
    <scope>PHOSPHORYLATION [LARGE SCALE ANALYSIS] AT THR-167</scope>
    <scope>IDENTIFICATION BY MASS SPECTROMETRY</scope>
</reference>
<protein>
    <recommendedName>
        <fullName>Polyadenylate-binding protein, cytoplasmic and nuclear</fullName>
        <shortName>PABP</shortName>
        <shortName>Poly(A)-binding protein</shortName>
    </recommendedName>
    <alternativeName>
        <fullName>Polyadenylate tail-binding protein</fullName>
    </alternativeName>
</protein>
<proteinExistence type="evidence at protein level"/>
<keyword id="KW-0963">Cytoplasm</keyword>
<keyword id="KW-0507">mRNA processing</keyword>
<keyword id="KW-0509">mRNA transport</keyword>
<keyword id="KW-0539">Nucleus</keyword>
<keyword id="KW-0597">Phosphoprotein</keyword>
<keyword id="KW-1185">Reference proteome</keyword>
<keyword id="KW-0677">Repeat</keyword>
<keyword id="KW-0694">RNA-binding</keyword>
<keyword id="KW-0810">Translation regulation</keyword>
<keyword id="KW-0813">Transport</keyword>
<name>PABP_SCHPO</name>
<organism>
    <name type="scientific">Schizosaccharomyces pombe (strain 972 / ATCC 24843)</name>
    <name type="common">Fission yeast</name>
    <dbReference type="NCBI Taxonomy" id="284812"/>
    <lineage>
        <taxon>Eukaryota</taxon>
        <taxon>Fungi</taxon>
        <taxon>Dikarya</taxon>
        <taxon>Ascomycota</taxon>
        <taxon>Taphrinomycotina</taxon>
        <taxon>Schizosaccharomycetes</taxon>
        <taxon>Schizosaccharomycetales</taxon>
        <taxon>Schizosaccharomycetaceae</taxon>
        <taxon>Schizosaccharomyces</taxon>
    </lineage>
</organism>
<gene>
    <name type="primary">pab1</name>
    <name type="synonym">pabp</name>
    <name type="ORF">SPAC57A7.04c</name>
</gene>
<accession>P31209</accession>
<accession>P87135</accession>